<organism>
    <name type="scientific">Proteus mirabilis</name>
    <dbReference type="NCBI Taxonomy" id="584"/>
    <lineage>
        <taxon>Bacteria</taxon>
        <taxon>Pseudomonadati</taxon>
        <taxon>Pseudomonadota</taxon>
        <taxon>Gammaproteobacteria</taxon>
        <taxon>Enterobacterales</taxon>
        <taxon>Morganellaceae</taxon>
        <taxon>Proteus</taxon>
    </lineage>
</organism>
<comment type="function">
    <text evidence="1">Required for formation of the rod structure of the flagellar apparatus. Together with FliI and FliH, may constitute the export apparatus of flagellin (By similarity).</text>
</comment>
<comment type="subcellular location">
    <subcellularLocation>
        <location>Cell inner membrane</location>
        <topology>Multi-pass membrane protein</topology>
    </subcellularLocation>
</comment>
<comment type="similarity">
    <text evidence="3">Belongs to the FHIPEP (flagella/HR/invasion proteins export pore) family.</text>
</comment>
<keyword id="KW-1005">Bacterial flagellum biogenesis</keyword>
<keyword id="KW-1006">Bacterial flagellum protein export</keyword>
<keyword id="KW-0997">Cell inner membrane</keyword>
<keyword id="KW-1003">Cell membrane</keyword>
<keyword id="KW-0472">Membrane</keyword>
<keyword id="KW-0653">Protein transport</keyword>
<keyword id="KW-0812">Transmembrane</keyword>
<keyword id="KW-1133">Transmembrane helix</keyword>
<keyword id="KW-0813">Transport</keyword>
<evidence type="ECO:0000250" key="1"/>
<evidence type="ECO:0000255" key="2"/>
<evidence type="ECO:0000305" key="3"/>
<feature type="chain" id="PRO_0000190020" description="Flagellar biosynthesis protein FlhA">
    <location>
        <begin position="1"/>
        <end position="696"/>
    </location>
</feature>
<feature type="transmembrane region" description="Helical" evidence="2">
    <location>
        <begin position="24"/>
        <end position="44"/>
    </location>
</feature>
<feature type="transmembrane region" description="Helical" evidence="2">
    <location>
        <begin position="45"/>
        <end position="65"/>
    </location>
</feature>
<feature type="transmembrane region" description="Helical" evidence="2">
    <location>
        <begin position="71"/>
        <end position="91"/>
    </location>
</feature>
<feature type="transmembrane region" description="Helical" evidence="2">
    <location>
        <begin position="121"/>
        <end position="141"/>
    </location>
</feature>
<feature type="transmembrane region" description="Helical" evidence="2">
    <location>
        <begin position="209"/>
        <end position="229"/>
    </location>
</feature>
<feature type="transmembrane region" description="Helical" evidence="2">
    <location>
        <begin position="247"/>
        <end position="267"/>
    </location>
</feature>
<feature type="transmembrane region" description="Helical" evidence="2">
    <location>
        <begin position="296"/>
        <end position="316"/>
    </location>
</feature>
<feature type="transmembrane region" description="Helical" evidence="2">
    <location>
        <begin position="478"/>
        <end position="498"/>
    </location>
</feature>
<dbReference type="EMBL" id="L36848">
    <property type="protein sequence ID" value="AAA50309.1"/>
    <property type="molecule type" value="Genomic_DNA"/>
</dbReference>
<dbReference type="PIR" id="S61502">
    <property type="entry name" value="S61502"/>
</dbReference>
<dbReference type="RefSeq" id="WP_041701178.1">
    <property type="nucleotide sequence ID" value="NZ_VKHV01000013.1"/>
</dbReference>
<dbReference type="SMR" id="Q51910"/>
<dbReference type="STRING" id="584.AOUC001_07275"/>
<dbReference type="PATRIC" id="fig|584.86.peg.1842"/>
<dbReference type="OrthoDB" id="9759185at2"/>
<dbReference type="GO" id="GO:0005886">
    <property type="term" value="C:plasma membrane"/>
    <property type="evidence" value="ECO:0007669"/>
    <property type="project" value="UniProtKB-SubCell"/>
</dbReference>
<dbReference type="GO" id="GO:0044780">
    <property type="term" value="P:bacterial-type flagellum assembly"/>
    <property type="evidence" value="ECO:0007669"/>
    <property type="project" value="InterPro"/>
</dbReference>
<dbReference type="GO" id="GO:0009306">
    <property type="term" value="P:protein secretion"/>
    <property type="evidence" value="ECO:0007669"/>
    <property type="project" value="InterPro"/>
</dbReference>
<dbReference type="Gene3D" id="3.40.30.60">
    <property type="entry name" value="FHIPEP family, domain 1"/>
    <property type="match status" value="1"/>
</dbReference>
<dbReference type="Gene3D" id="1.10.8.540">
    <property type="entry name" value="FHIPEP family, domain 3"/>
    <property type="match status" value="1"/>
</dbReference>
<dbReference type="Gene3D" id="3.40.50.12790">
    <property type="entry name" value="FHIPEP family, domain 4"/>
    <property type="match status" value="1"/>
</dbReference>
<dbReference type="InterPro" id="IPR042194">
    <property type="entry name" value="FHIPEP_1"/>
</dbReference>
<dbReference type="InterPro" id="IPR042193">
    <property type="entry name" value="FHIPEP_3"/>
</dbReference>
<dbReference type="InterPro" id="IPR042196">
    <property type="entry name" value="FHIPEP_4"/>
</dbReference>
<dbReference type="InterPro" id="IPR025505">
    <property type="entry name" value="FHIPEP_CS"/>
</dbReference>
<dbReference type="InterPro" id="IPR006301">
    <property type="entry name" value="FlhA"/>
</dbReference>
<dbReference type="InterPro" id="IPR001712">
    <property type="entry name" value="T3SS_FHIPEP"/>
</dbReference>
<dbReference type="NCBIfam" id="TIGR01398">
    <property type="entry name" value="FlhA"/>
    <property type="match status" value="1"/>
</dbReference>
<dbReference type="PANTHER" id="PTHR30161:SF1">
    <property type="entry name" value="FLAGELLAR BIOSYNTHESIS PROTEIN FLHA-RELATED"/>
    <property type="match status" value="1"/>
</dbReference>
<dbReference type="PANTHER" id="PTHR30161">
    <property type="entry name" value="FLAGELLAR EXPORT PROTEIN, MEMBRANE FLHA SUBUNIT-RELATED"/>
    <property type="match status" value="1"/>
</dbReference>
<dbReference type="Pfam" id="PF00771">
    <property type="entry name" value="FHIPEP"/>
    <property type="match status" value="1"/>
</dbReference>
<dbReference type="PIRSF" id="PIRSF005419">
    <property type="entry name" value="FlhA"/>
    <property type="match status" value="1"/>
</dbReference>
<dbReference type="PRINTS" id="PR00949">
    <property type="entry name" value="TYPE3IMAPROT"/>
</dbReference>
<dbReference type="PROSITE" id="PS00994">
    <property type="entry name" value="FHIPEP"/>
    <property type="match status" value="1"/>
</dbReference>
<reference key="1">
    <citation type="journal article" date="1995" name="Mol. Microbiol.">
        <title>Requirement for FlhA in flagella assembly and swarm-cell differentiation by Proteus mirabilis.</title>
        <authorList>
            <person name="Gygi D."/>
            <person name="Bailey M.J."/>
            <person name="Allison C."/>
            <person name="Hughes C."/>
        </authorList>
    </citation>
    <scope>NUCLEOTIDE SEQUENCE [GENOMIC DNA]</scope>
    <source>
        <strain>U6450</strain>
    </source>
</reference>
<accession>Q51910</accession>
<proteinExistence type="inferred from homology"/>
<gene>
    <name type="primary">flhA</name>
</gene>
<name>FLHA_PROMI</name>
<sequence length="696" mass="76145">MANLASLLRLPGNWKSSQWQILAGPVLILLILSMMVLPLPPFLLDLLFTFNIALSIMVLLVAMFTRRTLDFAAFPTILLFTTLLRLSLNVASTRIILMEGHTGSAAAGRVVEAFGHFLVGGNFAIGIVVFIILILINFMVITKGAGRIAEVGARFVLDGMPGKQMAIDADLNAGIINEEEAKKRRKEVSLESDFYGSMDGASKFVRGDAIAGLMILVINVVGGLVVGVAQHNMALNDAASTYTLLTIGDGLVAQIPALIISTAAGVIVTRVATDEDVGQQMVTQLFDNPRVLMLTAGVLGLLGLVPGMPNFVFLFFTAALAGLGWYILKRHSSPQVQQQKELEQVEKQNRVVEASWEDVQLEDPLSMEVGYRLIPMVDNRQNGELLGRISGIRKKFAQEMGYLPPVVHIRDNMEVKPSSYRILMKGVEIGHGEAHPGRWLAINPGNAVGTLEGDNTQEPAFGLPAVWIDDSLREQAQVQGYTVVAASTVIATHFNHVLNQYAAELFGRQEAQMLFDRVSKELPKMTENMIPDMLSLTVLHKVLQNLLAEQVPIRDMRTILEALAEHAPEQKDPAELTAVVRVALRRAITQHWFGDKEEIQVIGLDAGLERLLLQAMQSGGGLEPGLAENIEQQALDAVRRQEMSGGVPVLLVNHALRSLLSRFLRRSLPQLAVLSNMEISEGRHIRMTSMIGGQNN</sequence>
<protein>
    <recommendedName>
        <fullName>Flagellar biosynthesis protein FlhA</fullName>
    </recommendedName>
</protein>